<protein>
    <recommendedName>
        <fullName>Nuclear export protein</fullName>
        <shortName>NEP</shortName>
    </recommendedName>
    <alternativeName>
        <fullName>Non-structural protein 2</fullName>
        <shortName>NS2</shortName>
    </alternativeName>
</protein>
<dbReference type="EMBL" id="AY651581">
    <property type="protein sequence ID" value="AAT73450.1"/>
    <property type="molecule type" value="Genomic_RNA"/>
</dbReference>
<dbReference type="SMR" id="Q6DP36"/>
<dbReference type="GO" id="GO:0042025">
    <property type="term" value="C:host cell nucleus"/>
    <property type="evidence" value="ECO:0007669"/>
    <property type="project" value="UniProtKB-SubCell"/>
</dbReference>
<dbReference type="GO" id="GO:0044423">
    <property type="term" value="C:virion component"/>
    <property type="evidence" value="ECO:0007669"/>
    <property type="project" value="UniProtKB-KW"/>
</dbReference>
<dbReference type="GO" id="GO:0039675">
    <property type="term" value="P:exit of virus from host cell nucleus through nuclear pore"/>
    <property type="evidence" value="ECO:0007669"/>
    <property type="project" value="InterPro"/>
</dbReference>
<dbReference type="Gene3D" id="1.10.287.230">
    <property type="match status" value="1"/>
</dbReference>
<dbReference type="InterPro" id="IPR000968">
    <property type="entry name" value="Flu_NS2"/>
</dbReference>
<dbReference type="Pfam" id="PF00601">
    <property type="entry name" value="Flu_NS2"/>
    <property type="match status" value="1"/>
</dbReference>
<dbReference type="SUPFAM" id="SSF101156">
    <property type="entry name" value="Nonstructural protein ns2, Nep, M1-binding domain"/>
    <property type="match status" value="1"/>
</dbReference>
<organismHost>
    <name type="scientific">Aves</name>
    <dbReference type="NCBI Taxonomy" id="8782"/>
</organismHost>
<organismHost>
    <name type="scientific">Felis catus</name>
    <name type="common">Cat</name>
    <name type="synonym">Felis silvestris catus</name>
    <dbReference type="NCBI Taxonomy" id="9685"/>
</organismHost>
<organismHost>
    <name type="scientific">Homo sapiens</name>
    <name type="common">Human</name>
    <dbReference type="NCBI Taxonomy" id="9606"/>
</organismHost>
<organismHost>
    <name type="scientific">Panthera pardus</name>
    <name type="common">Leopard</name>
    <name type="synonym">Felis pardus</name>
    <dbReference type="NCBI Taxonomy" id="9691"/>
</organismHost>
<organismHost>
    <name type="scientific">Panthera tigris</name>
    <name type="common">Tiger</name>
    <dbReference type="NCBI Taxonomy" id="9694"/>
</organismHost>
<organismHost>
    <name type="scientific">Sus scrofa</name>
    <name type="common">Pig</name>
    <dbReference type="NCBI Taxonomy" id="9823"/>
</organismHost>
<gene>
    <name type="primary">NS</name>
</gene>
<proteinExistence type="inferred from homology"/>
<evidence type="ECO:0000250" key="1"/>
<evidence type="ECO:0000305" key="2"/>
<reference key="1">
    <citation type="journal article" date="2004" name="Nature">
        <title>Genesis of a highly pathogenic and potentially pandemic H5N1 influenza virus in eastern Asia.</title>
        <authorList>
            <person name="Li K.S."/>
            <person name="Guan Y."/>
            <person name="Wang J."/>
            <person name="Smith G.J.D."/>
            <person name="Xu K.M."/>
            <person name="Duan L."/>
            <person name="Rahardjo A.P."/>
            <person name="Puthavathana P."/>
            <person name="Buranathai C."/>
            <person name="Nguyen T.D."/>
            <person name="Estoepangestie A.T.S."/>
            <person name="Chaisingh A."/>
            <person name="Auewarakul P."/>
            <person name="Long H.T."/>
            <person name="Hanh N.T.H."/>
            <person name="Webby R.J."/>
            <person name="Poon L.L.M."/>
            <person name="Chen H."/>
            <person name="Shortridge K.F."/>
            <person name="Yuen K.Y."/>
            <person name="Webster R.G."/>
            <person name="Peiris J.S.M."/>
        </authorList>
    </citation>
    <scope>NUCLEOTIDE SEQUENCE [GENOMIC RNA]</scope>
</reference>
<comment type="function">
    <text evidence="1">Mediates the nuclear export of encapsidated genomic RNAs (ribonucleoproteins, RNPs). Acts as an adapter between viral RNPs complexes and the nuclear export machinery of the cell. Possesses no intrinsic RNA-binding activity, but includes a C-terminal M1-binding domain. This domain is believed to allow recognition of RNPs to which the M1 protein is bound. Because the M1 protein is not available in large quantities until the later stages of infection, such an indirect recognition mechanism probably ensures that genomic RNPs are not exported from the nucleus before sufficient quantities of viral mRNA and progeny genomic RNA have been synthesized. Furthermore, the RNPs enters the cytoplasm only when they have associated with the M1 protein that is necessary to guide them to the plasma membrane. May down-regulate viral RNA synthesis when overproduced (By similarity).</text>
</comment>
<comment type="subunit">
    <text evidence="1">Binds M1 protein. May interact with human nucleoporin RAB/HRB and exportin XPO1/CRM1 (By similarity).</text>
</comment>
<comment type="subcellular location">
    <subcellularLocation>
        <location evidence="2">Virion</location>
    </subcellularLocation>
    <subcellularLocation>
        <location evidence="1">Host nucleus</location>
    </subcellularLocation>
</comment>
<comment type="alternative products">
    <event type="alternative splicing"/>
    <isoform>
        <id>Q6DP36-1</id>
        <name>NEP</name>
        <name>NS2</name>
        <sequence type="displayed"/>
    </isoform>
    <isoform>
        <id>Q6DP37-1</id>
        <name>NS1</name>
        <sequence type="external"/>
    </isoform>
</comment>
<comment type="miscellaneous">
    <text>Average number present in a viral particle is estimated to be 130-200 molecules.</text>
</comment>
<comment type="similarity">
    <text evidence="2">Belongs to the influenza viruses NEP family.</text>
</comment>
<accession>Q6DP36</accession>
<sequence length="111" mass="13301">DILMRMSKMQLGSSSEDLNGMITRFESLKLYRDSLGEAVMRMGDLHSLQTRNGKWREQLSQKFEEIRWLIEEVRHRLKITENSFEQITFMQALQLLLEVEQEMRTFSFQLI</sequence>
<organism>
    <name type="scientific">Influenza A virus (strain A/Teal/China/2978.1/2002 H5N1 genotype W)</name>
    <dbReference type="NCBI Taxonomy" id="284215"/>
    <lineage>
        <taxon>Viruses</taxon>
        <taxon>Riboviria</taxon>
        <taxon>Orthornavirae</taxon>
        <taxon>Negarnaviricota</taxon>
        <taxon>Polyploviricotina</taxon>
        <taxon>Insthoviricetes</taxon>
        <taxon>Articulavirales</taxon>
        <taxon>Orthomyxoviridae</taxon>
        <taxon>Alphainfluenzavirus</taxon>
        <taxon>Alphainfluenzavirus influenzae</taxon>
        <taxon>Influenza A virus</taxon>
    </lineage>
</organism>
<name>NEP_I02A7</name>
<keyword id="KW-0025">Alternative splicing</keyword>
<keyword id="KW-1048">Host nucleus</keyword>
<keyword id="KW-0945">Host-virus interaction</keyword>
<keyword id="KW-0813">Transport</keyword>
<keyword id="KW-0946">Virion</keyword>
<feature type="chain" id="PRO_0000311738" description="Nuclear export protein">
    <location>
        <begin position="1" status="less than"/>
        <end position="111"/>
    </location>
</feature>
<feature type="short sequence motif" description="Nuclear export signal" evidence="1">
    <location>
        <begin position="2"/>
        <end position="11"/>
    </location>
</feature>
<feature type="short sequence motif" description="Nuclear export signal" evidence="1">
    <location>
        <begin position="75"/>
        <end position="84"/>
    </location>
</feature>
<feature type="non-terminal residue">
    <location>
        <position position="1"/>
    </location>
</feature>